<keyword id="KW-0963">Cytoplasm</keyword>
<keyword id="KW-0489">Methyltransferase</keyword>
<keyword id="KW-0698">rRNA processing</keyword>
<keyword id="KW-0949">S-adenosyl-L-methionine</keyword>
<keyword id="KW-0808">Transferase</keyword>
<organism>
    <name type="scientific">Escherichia coli O7:K1 (strain IAI39 / ExPEC)</name>
    <dbReference type="NCBI Taxonomy" id="585057"/>
    <lineage>
        <taxon>Bacteria</taxon>
        <taxon>Pseudomonadati</taxon>
        <taxon>Pseudomonadota</taxon>
        <taxon>Gammaproteobacteria</taxon>
        <taxon>Enterobacterales</taxon>
        <taxon>Enterobacteriaceae</taxon>
        <taxon>Escherichia</taxon>
    </lineage>
</organism>
<name>RLMM_ECO7I</name>
<comment type="function">
    <text evidence="1">Catalyzes the 2'-O-methylation at nucleotide C2498 in 23S rRNA.</text>
</comment>
<comment type="catalytic activity">
    <reaction evidence="1">
        <text>cytidine(2498) in 23S rRNA + S-adenosyl-L-methionine = 2'-O-methylcytidine(2498) in 23S rRNA + S-adenosyl-L-homocysteine + H(+)</text>
        <dbReference type="Rhea" id="RHEA:42788"/>
        <dbReference type="Rhea" id="RHEA-COMP:10244"/>
        <dbReference type="Rhea" id="RHEA-COMP:10245"/>
        <dbReference type="ChEBI" id="CHEBI:15378"/>
        <dbReference type="ChEBI" id="CHEBI:57856"/>
        <dbReference type="ChEBI" id="CHEBI:59789"/>
        <dbReference type="ChEBI" id="CHEBI:74495"/>
        <dbReference type="ChEBI" id="CHEBI:82748"/>
        <dbReference type="EC" id="2.1.1.186"/>
    </reaction>
</comment>
<comment type="subunit">
    <text evidence="1">Monomer.</text>
</comment>
<comment type="subcellular location">
    <subcellularLocation>
        <location evidence="1">Cytoplasm</location>
    </subcellularLocation>
</comment>
<comment type="similarity">
    <text evidence="1">Belongs to the class I-like SAM-binding methyltransferase superfamily. RNA methyltransferase RlmE family. RlmM subfamily.</text>
</comment>
<accession>B7NVV4</accession>
<reference key="1">
    <citation type="journal article" date="2009" name="PLoS Genet.">
        <title>Organised genome dynamics in the Escherichia coli species results in highly diverse adaptive paths.</title>
        <authorList>
            <person name="Touchon M."/>
            <person name="Hoede C."/>
            <person name="Tenaillon O."/>
            <person name="Barbe V."/>
            <person name="Baeriswyl S."/>
            <person name="Bidet P."/>
            <person name="Bingen E."/>
            <person name="Bonacorsi S."/>
            <person name="Bouchier C."/>
            <person name="Bouvet O."/>
            <person name="Calteau A."/>
            <person name="Chiapello H."/>
            <person name="Clermont O."/>
            <person name="Cruveiller S."/>
            <person name="Danchin A."/>
            <person name="Diard M."/>
            <person name="Dossat C."/>
            <person name="Karoui M.E."/>
            <person name="Frapy E."/>
            <person name="Garry L."/>
            <person name="Ghigo J.M."/>
            <person name="Gilles A.M."/>
            <person name="Johnson J."/>
            <person name="Le Bouguenec C."/>
            <person name="Lescat M."/>
            <person name="Mangenot S."/>
            <person name="Martinez-Jehanne V."/>
            <person name="Matic I."/>
            <person name="Nassif X."/>
            <person name="Oztas S."/>
            <person name="Petit M.A."/>
            <person name="Pichon C."/>
            <person name="Rouy Z."/>
            <person name="Ruf C.S."/>
            <person name="Schneider D."/>
            <person name="Tourret J."/>
            <person name="Vacherie B."/>
            <person name="Vallenet D."/>
            <person name="Medigue C."/>
            <person name="Rocha E.P.C."/>
            <person name="Denamur E."/>
        </authorList>
    </citation>
    <scope>NUCLEOTIDE SEQUENCE [LARGE SCALE GENOMIC DNA]</scope>
    <source>
        <strain>IAI39 / ExPEC</strain>
    </source>
</reference>
<protein>
    <recommendedName>
        <fullName evidence="1">Ribosomal RNA large subunit methyltransferase M</fullName>
        <ecNumber evidence="1">2.1.1.186</ecNumber>
    </recommendedName>
    <alternativeName>
        <fullName evidence="1">23S rRNA (cytidine2498-2'-O)-methyltransferase</fullName>
    </alternativeName>
    <alternativeName>
        <fullName evidence="1">23S rRNA 2'-O-ribose methyltransferase RlmM</fullName>
    </alternativeName>
</protein>
<proteinExistence type="inferred from homology"/>
<evidence type="ECO:0000255" key="1">
    <source>
        <dbReference type="HAMAP-Rule" id="MF_01551"/>
    </source>
</evidence>
<feature type="chain" id="PRO_1000201518" description="Ribosomal RNA large subunit methyltransferase M">
    <location>
        <begin position="1"/>
        <end position="366"/>
    </location>
</feature>
<feature type="active site" description="Proton acceptor" evidence="1">
    <location>
        <position position="306"/>
    </location>
</feature>
<feature type="binding site" evidence="1">
    <location>
        <position position="188"/>
    </location>
    <ligand>
        <name>S-adenosyl-L-methionine</name>
        <dbReference type="ChEBI" id="CHEBI:59789"/>
    </ligand>
</feature>
<feature type="binding site" evidence="1">
    <location>
        <begin position="221"/>
        <end position="224"/>
    </location>
    <ligand>
        <name>S-adenosyl-L-methionine</name>
        <dbReference type="ChEBI" id="CHEBI:59789"/>
    </ligand>
</feature>
<feature type="binding site" evidence="1">
    <location>
        <position position="240"/>
    </location>
    <ligand>
        <name>S-adenosyl-L-methionine</name>
        <dbReference type="ChEBI" id="CHEBI:59789"/>
    </ligand>
</feature>
<feature type="binding site" evidence="1">
    <location>
        <position position="260"/>
    </location>
    <ligand>
        <name>S-adenosyl-L-methionine</name>
        <dbReference type="ChEBI" id="CHEBI:59789"/>
    </ligand>
</feature>
<feature type="binding site" evidence="1">
    <location>
        <position position="277"/>
    </location>
    <ligand>
        <name>S-adenosyl-L-methionine</name>
        <dbReference type="ChEBI" id="CHEBI:59789"/>
    </ligand>
</feature>
<dbReference type="EC" id="2.1.1.186" evidence="1"/>
<dbReference type="EMBL" id="CU928164">
    <property type="protein sequence ID" value="CAR19347.1"/>
    <property type="molecule type" value="Genomic_DNA"/>
</dbReference>
<dbReference type="RefSeq" id="WP_001045520.1">
    <property type="nucleotide sequence ID" value="NC_011750.1"/>
</dbReference>
<dbReference type="RefSeq" id="YP_002409152.1">
    <property type="nucleotide sequence ID" value="NC_011750.1"/>
</dbReference>
<dbReference type="SMR" id="B7NVV4"/>
<dbReference type="STRING" id="585057.ECIAI39_3228"/>
<dbReference type="GeneID" id="75203803"/>
<dbReference type="KEGG" id="ect:ECIAI39_3228"/>
<dbReference type="PATRIC" id="fig|585057.6.peg.3354"/>
<dbReference type="HOGENOM" id="CLU_043780_0_0_6"/>
<dbReference type="Proteomes" id="UP000000749">
    <property type="component" value="Chromosome"/>
</dbReference>
<dbReference type="GO" id="GO:0005737">
    <property type="term" value="C:cytoplasm"/>
    <property type="evidence" value="ECO:0007669"/>
    <property type="project" value="UniProtKB-SubCell"/>
</dbReference>
<dbReference type="GO" id="GO:0008757">
    <property type="term" value="F:S-adenosylmethionine-dependent methyltransferase activity"/>
    <property type="evidence" value="ECO:0007669"/>
    <property type="project" value="UniProtKB-UniRule"/>
</dbReference>
<dbReference type="GO" id="GO:0032259">
    <property type="term" value="P:methylation"/>
    <property type="evidence" value="ECO:0007669"/>
    <property type="project" value="UniProtKB-KW"/>
</dbReference>
<dbReference type="GO" id="GO:0006364">
    <property type="term" value="P:rRNA processing"/>
    <property type="evidence" value="ECO:0007669"/>
    <property type="project" value="UniProtKB-UniRule"/>
</dbReference>
<dbReference type="FunFam" id="3.30.2300.20:FF:000001">
    <property type="entry name" value="Ribosomal RNA large subunit methyltransferase M"/>
    <property type="match status" value="1"/>
</dbReference>
<dbReference type="FunFam" id="3.30.70.2810:FF:000001">
    <property type="entry name" value="Ribosomal RNA large subunit methyltransferase M"/>
    <property type="match status" value="1"/>
</dbReference>
<dbReference type="FunFam" id="3.40.50.150:FF:000020">
    <property type="entry name" value="Ribosomal RNA large subunit methyltransferase M"/>
    <property type="match status" value="1"/>
</dbReference>
<dbReference type="Gene3D" id="3.30.2300.20">
    <property type="match status" value="1"/>
</dbReference>
<dbReference type="Gene3D" id="3.30.70.2810">
    <property type="match status" value="1"/>
</dbReference>
<dbReference type="Gene3D" id="3.40.50.150">
    <property type="entry name" value="Vaccinia Virus protein VP39"/>
    <property type="match status" value="1"/>
</dbReference>
<dbReference type="HAMAP" id="MF_01551">
    <property type="entry name" value="23SrRNA_methyltr_M"/>
    <property type="match status" value="1"/>
</dbReference>
<dbReference type="InterPro" id="IPR040739">
    <property type="entry name" value="RlmM_FDX"/>
</dbReference>
<dbReference type="InterPro" id="IPR048646">
    <property type="entry name" value="RlmM_THUMP-like"/>
</dbReference>
<dbReference type="InterPro" id="IPR002877">
    <property type="entry name" value="RNA_MeTrfase_FtsJ_dom"/>
</dbReference>
<dbReference type="InterPro" id="IPR011224">
    <property type="entry name" value="rRNA_MeTrfase_M"/>
</dbReference>
<dbReference type="InterPro" id="IPR029063">
    <property type="entry name" value="SAM-dependent_MTases_sf"/>
</dbReference>
<dbReference type="NCBIfam" id="NF008734">
    <property type="entry name" value="PRK11760.1"/>
    <property type="match status" value="1"/>
</dbReference>
<dbReference type="PANTHER" id="PTHR37524">
    <property type="entry name" value="RIBOSOMAL RNA LARGE SUBUNIT METHYLTRANSFERASE M"/>
    <property type="match status" value="1"/>
</dbReference>
<dbReference type="PANTHER" id="PTHR37524:SF2">
    <property type="entry name" value="RIBOSOMAL RNA METHYLTRANSFERASE FTSJ DOMAIN-CONTAINING PROTEIN"/>
    <property type="match status" value="1"/>
</dbReference>
<dbReference type="Pfam" id="PF01728">
    <property type="entry name" value="FtsJ"/>
    <property type="match status" value="1"/>
</dbReference>
<dbReference type="Pfam" id="PF18125">
    <property type="entry name" value="RlmM_FDX"/>
    <property type="match status" value="1"/>
</dbReference>
<dbReference type="Pfam" id="PF21239">
    <property type="entry name" value="RLMM_N"/>
    <property type="match status" value="1"/>
</dbReference>
<dbReference type="PIRSF" id="PIRSF028774">
    <property type="entry name" value="UCP028774"/>
    <property type="match status" value="1"/>
</dbReference>
<dbReference type="SUPFAM" id="SSF53335">
    <property type="entry name" value="S-adenosyl-L-methionine-dependent methyltransferases"/>
    <property type="match status" value="1"/>
</dbReference>
<gene>
    <name evidence="1" type="primary">rlmM</name>
    <name type="ordered locus">ECIAI39_3228</name>
</gene>
<sequence>MNKVVLLCRPGFEKECAAEITDKAGQREIFGFARVKENAGYVIYECYQPDDGDKLIRELPFSSLIFARQWFVVGELLQHLPPEDRITPIVGMLQGVVEKGGELRVEVADTNESKELLKFCRKFTVPLRAALRDAGVLANYETPKRPVVHVFFIAPGCCYTGYSYSNNNSPFYMGIPRLKFPADAPSRSTLKLEEAFHVFIPADEWDERLANGMWAVDLGACPGGWTYQLVKRNMWVYSVDNGPMAQSLMDTGQVTWLREDGFKFRPTRSNISWMVCDMVEKPAKVAALMAQWLVNGWCRETIFNLKLPMKKRYEEVSHNLAYIQAQLDEHGINAQIQARQLYHDREEVTVHVRRIWAAVGGRRDER</sequence>